<gene>
    <name type="primary">COI</name>
</gene>
<keyword id="KW-0106">Calcium</keyword>
<keyword id="KW-0186">Copper</keyword>
<keyword id="KW-0249">Electron transport</keyword>
<keyword id="KW-0349">Heme</keyword>
<keyword id="KW-0408">Iron</keyword>
<keyword id="KW-0460">Magnesium</keyword>
<keyword id="KW-0472">Membrane</keyword>
<keyword id="KW-0479">Metal-binding</keyword>
<keyword id="KW-0496">Mitochondrion</keyword>
<keyword id="KW-0999">Mitochondrion inner membrane</keyword>
<keyword id="KW-0679">Respiratory chain</keyword>
<keyword id="KW-1278">Translocase</keyword>
<keyword id="KW-0812">Transmembrane</keyword>
<keyword id="KW-1133">Transmembrane helix</keyword>
<keyword id="KW-0813">Transport</keyword>
<protein>
    <recommendedName>
        <fullName>Cytochrome c oxidase subunit 1</fullName>
        <ecNumber>7.1.1.9</ecNumber>
    </recommendedName>
    <alternativeName>
        <fullName>Cytochrome c oxidase polypeptide I</fullName>
    </alternativeName>
</protein>
<comment type="function">
    <text evidence="2">Component of the cytochrome c oxidase, the last enzyme in the mitochondrial electron transport chain which drives oxidative phosphorylation. The respiratory chain contains 3 multisubunit complexes succinate dehydrogenase (complex II, CII), ubiquinol-cytochrome c oxidoreductase (cytochrome b-c1 complex, complex III, CIII) and cytochrome c oxidase (complex IV, CIV), that cooperate to transfer electrons derived from NADH and succinate to molecular oxygen, creating an electrochemical gradient over the inner membrane that drives transmembrane transport and the ATP synthase. Cytochrome c oxidase is the component of the respiratory chain that catalyzes the reduction of oxygen to water. Electrons originating from reduced cytochrome c in the intermembrane space (IMS) are transferred via the dinuclear copper A center (CU(A)) of subunit 2 and heme A of subunit 1 to the active site in subunit 1, a binuclear center (BNC) formed by heme A3 and copper B (CU(B)). The BNC reduces molecular oxygen to 2 water molecules using 4 electrons from cytochrome c in the IMS and 4 protons from the mitochondrial matrix.</text>
</comment>
<comment type="catalytic activity">
    <reaction evidence="2">
        <text>4 Fe(II)-[cytochrome c] + O2 + 8 H(+)(in) = 4 Fe(III)-[cytochrome c] + 2 H2O + 4 H(+)(out)</text>
        <dbReference type="Rhea" id="RHEA:11436"/>
        <dbReference type="Rhea" id="RHEA-COMP:10350"/>
        <dbReference type="Rhea" id="RHEA-COMP:14399"/>
        <dbReference type="ChEBI" id="CHEBI:15377"/>
        <dbReference type="ChEBI" id="CHEBI:15378"/>
        <dbReference type="ChEBI" id="CHEBI:15379"/>
        <dbReference type="ChEBI" id="CHEBI:29033"/>
        <dbReference type="ChEBI" id="CHEBI:29034"/>
        <dbReference type="EC" id="7.1.1.9"/>
    </reaction>
    <physiologicalReaction direction="left-to-right" evidence="2">
        <dbReference type="Rhea" id="RHEA:11437"/>
    </physiologicalReaction>
</comment>
<comment type="cofactor">
    <cofactor evidence="2">
        <name>heme</name>
        <dbReference type="ChEBI" id="CHEBI:30413"/>
    </cofactor>
    <text evidence="2">Binds 2 heme A groups non-covalently per subunit.</text>
</comment>
<comment type="cofactor">
    <cofactor evidence="2">
        <name>Cu cation</name>
        <dbReference type="ChEBI" id="CHEBI:23378"/>
    </cofactor>
    <text evidence="2">Binds a copper B center.</text>
</comment>
<comment type="pathway">
    <text evidence="2">Energy metabolism; oxidative phosphorylation.</text>
</comment>
<comment type="subunit">
    <text evidence="2">Component of the cytochrome c oxidase (complex IV, CIV), a multisubunit enzyme composed of a catalytic core of 3 subunits and several supernumerary subunits. The complex exists as a monomer or a dimer and forms supercomplexes (SCs) in the inner mitochondrial membrane with ubiquinol-cytochrome c oxidoreductase (cytochrome b-c1 complex, complex III, CIII).</text>
</comment>
<comment type="subcellular location">
    <subcellularLocation>
        <location evidence="2">Mitochondrion inner membrane</location>
        <topology evidence="2">Multi-pass membrane protein</topology>
    </subcellularLocation>
</comment>
<comment type="similarity">
    <text evidence="4">Belongs to the heme-copper respiratory oxidase family.</text>
</comment>
<name>COX1_RHISA</name>
<proteinExistence type="inferred from homology"/>
<dbReference type="EC" id="7.1.1.9"/>
<dbReference type="EMBL" id="AF081829">
    <property type="protein sequence ID" value="AAD05518.1"/>
    <property type="molecule type" value="Genomic_DNA"/>
</dbReference>
<dbReference type="PIR" id="T11154">
    <property type="entry name" value="T11154"/>
</dbReference>
<dbReference type="SMR" id="O99818"/>
<dbReference type="KEGG" id="rsan:808364"/>
<dbReference type="CTD" id="4512"/>
<dbReference type="OrthoDB" id="6499754at2759"/>
<dbReference type="UniPathway" id="UPA00705"/>
<dbReference type="GO" id="GO:0005743">
    <property type="term" value="C:mitochondrial inner membrane"/>
    <property type="evidence" value="ECO:0007669"/>
    <property type="project" value="UniProtKB-SubCell"/>
</dbReference>
<dbReference type="GO" id="GO:0045277">
    <property type="term" value="C:respiratory chain complex IV"/>
    <property type="evidence" value="ECO:0007669"/>
    <property type="project" value="InterPro"/>
</dbReference>
<dbReference type="GO" id="GO:0004129">
    <property type="term" value="F:cytochrome-c oxidase activity"/>
    <property type="evidence" value="ECO:0007669"/>
    <property type="project" value="UniProtKB-EC"/>
</dbReference>
<dbReference type="GO" id="GO:0020037">
    <property type="term" value="F:heme binding"/>
    <property type="evidence" value="ECO:0007669"/>
    <property type="project" value="InterPro"/>
</dbReference>
<dbReference type="GO" id="GO:0046872">
    <property type="term" value="F:metal ion binding"/>
    <property type="evidence" value="ECO:0007669"/>
    <property type="project" value="UniProtKB-KW"/>
</dbReference>
<dbReference type="GO" id="GO:0015990">
    <property type="term" value="P:electron transport coupled proton transport"/>
    <property type="evidence" value="ECO:0007669"/>
    <property type="project" value="TreeGrafter"/>
</dbReference>
<dbReference type="GO" id="GO:0006123">
    <property type="term" value="P:mitochondrial electron transport, cytochrome c to oxygen"/>
    <property type="evidence" value="ECO:0007669"/>
    <property type="project" value="TreeGrafter"/>
</dbReference>
<dbReference type="CDD" id="cd01663">
    <property type="entry name" value="Cyt_c_Oxidase_I"/>
    <property type="match status" value="1"/>
</dbReference>
<dbReference type="FunFam" id="1.20.210.10:FF:000001">
    <property type="entry name" value="Cytochrome c oxidase subunit 1"/>
    <property type="match status" value="1"/>
</dbReference>
<dbReference type="Gene3D" id="1.20.210.10">
    <property type="entry name" value="Cytochrome c oxidase-like, subunit I domain"/>
    <property type="match status" value="1"/>
</dbReference>
<dbReference type="InterPro" id="IPR023616">
    <property type="entry name" value="Cyt_c_oxase-like_su1_dom"/>
</dbReference>
<dbReference type="InterPro" id="IPR036927">
    <property type="entry name" value="Cyt_c_oxase-like_su1_sf"/>
</dbReference>
<dbReference type="InterPro" id="IPR000883">
    <property type="entry name" value="Cyt_C_Oxase_1"/>
</dbReference>
<dbReference type="InterPro" id="IPR023615">
    <property type="entry name" value="Cyt_c_Oxase_su1_BS"/>
</dbReference>
<dbReference type="InterPro" id="IPR033944">
    <property type="entry name" value="Cyt_c_oxase_su1_dom"/>
</dbReference>
<dbReference type="PANTHER" id="PTHR10422">
    <property type="entry name" value="CYTOCHROME C OXIDASE SUBUNIT 1"/>
    <property type="match status" value="1"/>
</dbReference>
<dbReference type="PANTHER" id="PTHR10422:SF18">
    <property type="entry name" value="CYTOCHROME C OXIDASE SUBUNIT 1"/>
    <property type="match status" value="1"/>
</dbReference>
<dbReference type="Pfam" id="PF00115">
    <property type="entry name" value="COX1"/>
    <property type="match status" value="1"/>
</dbReference>
<dbReference type="PRINTS" id="PR01165">
    <property type="entry name" value="CYCOXIDASEI"/>
</dbReference>
<dbReference type="SUPFAM" id="SSF81442">
    <property type="entry name" value="Cytochrome c oxidase subunit I-like"/>
    <property type="match status" value="1"/>
</dbReference>
<dbReference type="PROSITE" id="PS50855">
    <property type="entry name" value="COX1"/>
    <property type="match status" value="1"/>
</dbReference>
<dbReference type="PROSITE" id="PS00077">
    <property type="entry name" value="COX1_CUB"/>
    <property type="match status" value="1"/>
</dbReference>
<organism>
    <name type="scientific">Rhipicephalus sanguineus</name>
    <name type="common">Brown dog tick</name>
    <name type="synonym">Ixodes sanguineus</name>
    <dbReference type="NCBI Taxonomy" id="34632"/>
    <lineage>
        <taxon>Eukaryota</taxon>
        <taxon>Metazoa</taxon>
        <taxon>Ecdysozoa</taxon>
        <taxon>Arthropoda</taxon>
        <taxon>Chelicerata</taxon>
        <taxon>Arachnida</taxon>
        <taxon>Acari</taxon>
        <taxon>Parasitiformes</taxon>
        <taxon>Ixodida</taxon>
        <taxon>Ixodoidea</taxon>
        <taxon>Ixodidae</taxon>
        <taxon>Rhipicephalinae</taxon>
        <taxon>Rhipicephalus</taxon>
        <taxon>Rhipicephalus</taxon>
    </lineage>
</organism>
<accession>O99818</accession>
<feature type="chain" id="PRO_0000183408" description="Cytochrome c oxidase subunit 1">
    <location>
        <begin position="1"/>
        <end position="512"/>
    </location>
</feature>
<feature type="transmembrane region" description="Helical" evidence="3">
    <location>
        <begin position="16"/>
        <end position="36"/>
    </location>
</feature>
<feature type="transmembrane region" description="Helical" evidence="3">
    <location>
        <begin position="55"/>
        <end position="75"/>
    </location>
</feature>
<feature type="transmembrane region" description="Helical" evidence="3">
    <location>
        <begin position="101"/>
        <end position="121"/>
    </location>
</feature>
<feature type="transmembrane region" description="Helical" evidence="3">
    <location>
        <begin position="144"/>
        <end position="164"/>
    </location>
</feature>
<feature type="transmembrane region" description="Helical" evidence="3">
    <location>
        <begin position="182"/>
        <end position="202"/>
    </location>
</feature>
<feature type="transmembrane region" description="Helical" evidence="3">
    <location>
        <begin position="233"/>
        <end position="253"/>
    </location>
</feature>
<feature type="transmembrane region" description="Helical" evidence="3">
    <location>
        <begin position="267"/>
        <end position="287"/>
    </location>
</feature>
<feature type="transmembrane region" description="Helical" evidence="3">
    <location>
        <begin position="304"/>
        <end position="324"/>
    </location>
</feature>
<feature type="transmembrane region" description="Helical" evidence="3">
    <location>
        <begin position="337"/>
        <end position="357"/>
    </location>
</feature>
<feature type="transmembrane region" description="Helical" evidence="3">
    <location>
        <begin position="382"/>
        <end position="402"/>
    </location>
</feature>
<feature type="transmembrane region" description="Helical" evidence="3">
    <location>
        <begin position="413"/>
        <end position="433"/>
    </location>
</feature>
<feature type="transmembrane region" description="Helical" evidence="3">
    <location>
        <begin position="456"/>
        <end position="476"/>
    </location>
</feature>
<feature type="binding site" evidence="2">
    <location>
        <position position="39"/>
    </location>
    <ligand>
        <name>Ca(2+)</name>
        <dbReference type="ChEBI" id="CHEBI:29108"/>
    </ligand>
</feature>
<feature type="binding site" evidence="2">
    <location>
        <position position="44"/>
    </location>
    <ligand>
        <name>Ca(2+)</name>
        <dbReference type="ChEBI" id="CHEBI:29108"/>
    </ligand>
</feature>
<feature type="binding site" description="axial binding residue" evidence="2">
    <location>
        <position position="60"/>
    </location>
    <ligand>
        <name>Fe(II)-heme a</name>
        <dbReference type="ChEBI" id="CHEBI:61715"/>
        <note>low-spin</note>
    </ligand>
    <ligandPart>
        <name>Fe</name>
        <dbReference type="ChEBI" id="CHEBI:18248"/>
    </ligandPart>
</feature>
<feature type="binding site" evidence="2">
    <location>
        <position position="239"/>
    </location>
    <ligand>
        <name>Cu cation</name>
        <dbReference type="ChEBI" id="CHEBI:23378"/>
        <label>B</label>
    </ligand>
</feature>
<feature type="binding site" evidence="1">
    <location>
        <position position="243"/>
    </location>
    <ligand>
        <name>O2</name>
        <dbReference type="ChEBI" id="CHEBI:15379"/>
    </ligand>
</feature>
<feature type="binding site" evidence="2">
    <location>
        <position position="289"/>
    </location>
    <ligand>
        <name>Cu cation</name>
        <dbReference type="ChEBI" id="CHEBI:23378"/>
        <label>B</label>
    </ligand>
</feature>
<feature type="binding site" evidence="2">
    <location>
        <position position="290"/>
    </location>
    <ligand>
        <name>Cu cation</name>
        <dbReference type="ChEBI" id="CHEBI:23378"/>
        <label>B</label>
    </ligand>
</feature>
<feature type="binding site" evidence="2">
    <location>
        <position position="367"/>
    </location>
    <ligand>
        <name>Mg(2+)</name>
        <dbReference type="ChEBI" id="CHEBI:18420"/>
        <note>ligand shared with subunit 2</note>
    </ligand>
</feature>
<feature type="binding site" evidence="2">
    <location>
        <position position="368"/>
    </location>
    <ligand>
        <name>Mg(2+)</name>
        <dbReference type="ChEBI" id="CHEBI:18420"/>
        <note>ligand shared with subunit 2</note>
    </ligand>
</feature>
<feature type="binding site" description="axial binding residue" evidence="2">
    <location>
        <position position="375"/>
    </location>
    <ligand>
        <name>heme a3</name>
        <dbReference type="ChEBI" id="CHEBI:83282"/>
        <note>high-spin</note>
    </ligand>
    <ligandPart>
        <name>Fe</name>
        <dbReference type="ChEBI" id="CHEBI:18248"/>
    </ligandPart>
</feature>
<feature type="binding site" description="axial binding residue" evidence="2">
    <location>
        <position position="377"/>
    </location>
    <ligand>
        <name>Fe(II)-heme a</name>
        <dbReference type="ChEBI" id="CHEBI:61715"/>
        <note>low-spin</note>
    </ligand>
    <ligandPart>
        <name>Fe</name>
        <dbReference type="ChEBI" id="CHEBI:18248"/>
    </ligandPart>
</feature>
<feature type="cross-link" description="1'-histidyl-3'-tyrosine (His-Tyr)" evidence="2">
    <location>
        <begin position="239"/>
        <end position="243"/>
    </location>
</feature>
<evidence type="ECO:0000250" key="1">
    <source>
        <dbReference type="UniProtKB" id="P00396"/>
    </source>
</evidence>
<evidence type="ECO:0000250" key="2">
    <source>
        <dbReference type="UniProtKB" id="P00401"/>
    </source>
</evidence>
<evidence type="ECO:0000255" key="3"/>
<evidence type="ECO:0000305" key="4"/>
<sequence>MLPRWMYSTNHKDIGTMYLIFGAWSGMLGLSMSMLIRMELGQPGTLIGNDQIYNVIVTAHAFIMIFFMVMPIMIGGFGNWLVPIMLGAPDMAFPRMNNMSFWLLPPSLFLLINSSLIESGAGTGWTVYPPLSSNLSHYGPSVDLAIFSLHLAGASSILGAINFITTIVNMRSIGMTMERMPLFVWSVLITAILLLLSLPVLAGAITMLLTDRNFNTSFFDPSGGGDPILYQHLFWFFGHPEVYILILPGFGMISQIICYNTGKKEPFGNLGMIYAMAAIGLLGFIVWAHHMFTVGMDVDTRAYFTSATMIIAVPTGIKIFSWLATLHGSHIKFNTSILWALGFVFLFTVGGLTGIMLANSSIDIVLHDTYYVVAHFHYVLSMGAVFGIMGAIIHWFPMFLGLNLNSMLTKVQFMITFIGVNLTFFPQHFLGLAGMPRRYSDYPDFFTKWNFISSLGSLISLMGVIMLIIIIWTSIIEKKMINFSSFTNSSIEWMLNFPPSEHSFNQNNIILK</sequence>
<geneLocation type="mitochondrion"/>
<reference key="1">
    <citation type="journal article" date="1998" name="Mol. Biol. Evol.">
        <title>Mitochondrial gene order is not conserved in arthropods: prostriate and metastriate tick mitochondrial genomes.</title>
        <authorList>
            <person name="Black W.C. IV"/>
            <person name="Roehrdanz R.L."/>
        </authorList>
    </citation>
    <scope>NUCLEOTIDE SEQUENCE [GENOMIC DNA]</scope>
</reference>